<gene>
    <name evidence="1" type="primary">plsY</name>
    <name type="ordered locus">Cj0357c</name>
</gene>
<accession>Q9PIE4</accession>
<accession>Q0PBF2</accession>
<comment type="function">
    <text evidence="1">Catalyzes the transfer of an acyl group from acyl-phosphate (acyl-PO(4)) to glycerol-3-phosphate (G3P) to form lysophosphatidic acid (LPA). This enzyme utilizes acyl-phosphate as fatty acyl donor, but not acyl-CoA or acyl-ACP.</text>
</comment>
<comment type="catalytic activity">
    <reaction evidence="1">
        <text>an acyl phosphate + sn-glycerol 3-phosphate = a 1-acyl-sn-glycero-3-phosphate + phosphate</text>
        <dbReference type="Rhea" id="RHEA:34075"/>
        <dbReference type="ChEBI" id="CHEBI:43474"/>
        <dbReference type="ChEBI" id="CHEBI:57597"/>
        <dbReference type="ChEBI" id="CHEBI:57970"/>
        <dbReference type="ChEBI" id="CHEBI:59918"/>
        <dbReference type="EC" id="2.3.1.275"/>
    </reaction>
</comment>
<comment type="pathway">
    <text evidence="1">Lipid metabolism; phospholipid metabolism.</text>
</comment>
<comment type="subunit">
    <text evidence="1">Probably interacts with PlsX.</text>
</comment>
<comment type="subcellular location">
    <subcellularLocation>
        <location evidence="1">Cell inner membrane</location>
        <topology evidence="1">Multi-pass membrane protein</topology>
    </subcellularLocation>
</comment>
<comment type="similarity">
    <text evidence="1">Belongs to the PlsY family.</text>
</comment>
<name>PLSY_CAMJE</name>
<organism>
    <name type="scientific">Campylobacter jejuni subsp. jejuni serotype O:2 (strain ATCC 700819 / NCTC 11168)</name>
    <dbReference type="NCBI Taxonomy" id="192222"/>
    <lineage>
        <taxon>Bacteria</taxon>
        <taxon>Pseudomonadati</taxon>
        <taxon>Campylobacterota</taxon>
        <taxon>Epsilonproteobacteria</taxon>
        <taxon>Campylobacterales</taxon>
        <taxon>Campylobacteraceae</taxon>
        <taxon>Campylobacter</taxon>
    </lineage>
</organism>
<reference key="1">
    <citation type="journal article" date="2000" name="Nature">
        <title>The genome sequence of the food-borne pathogen Campylobacter jejuni reveals hypervariable sequences.</title>
        <authorList>
            <person name="Parkhill J."/>
            <person name="Wren B.W."/>
            <person name="Mungall K.L."/>
            <person name="Ketley J.M."/>
            <person name="Churcher C.M."/>
            <person name="Basham D."/>
            <person name="Chillingworth T."/>
            <person name="Davies R.M."/>
            <person name="Feltwell T."/>
            <person name="Holroyd S."/>
            <person name="Jagels K."/>
            <person name="Karlyshev A.V."/>
            <person name="Moule S."/>
            <person name="Pallen M.J."/>
            <person name="Penn C.W."/>
            <person name="Quail M.A."/>
            <person name="Rajandream M.A."/>
            <person name="Rutherford K.M."/>
            <person name="van Vliet A.H.M."/>
            <person name="Whitehead S."/>
            <person name="Barrell B.G."/>
        </authorList>
    </citation>
    <scope>NUCLEOTIDE SEQUENCE [LARGE SCALE GENOMIC DNA]</scope>
    <source>
        <strain>ATCC 700819 / NCTC 11168</strain>
    </source>
</reference>
<sequence>MENLIIYAFIYLLGSIPFGLILAKFFAKTDIKKEGSKSIGATNVLRVVKEKNPKLAKKLAIATIILDFAKAAIPLLTLKFLHYDQALLWSVAVLAILGHCFSIYLLFEGGKGIATGAGAMIVLLPLEVLTAFIVWVVIGKIFKISSLASLAALLAFVVSSFIFNYDLEIHTHAPVFIIAFIIVYKHLPNIKRLIFKEECKVI</sequence>
<evidence type="ECO:0000255" key="1">
    <source>
        <dbReference type="HAMAP-Rule" id="MF_01043"/>
    </source>
</evidence>
<keyword id="KW-0997">Cell inner membrane</keyword>
<keyword id="KW-1003">Cell membrane</keyword>
<keyword id="KW-0444">Lipid biosynthesis</keyword>
<keyword id="KW-0443">Lipid metabolism</keyword>
<keyword id="KW-0472">Membrane</keyword>
<keyword id="KW-0594">Phospholipid biosynthesis</keyword>
<keyword id="KW-1208">Phospholipid metabolism</keyword>
<keyword id="KW-1185">Reference proteome</keyword>
<keyword id="KW-0808">Transferase</keyword>
<keyword id="KW-0812">Transmembrane</keyword>
<keyword id="KW-1133">Transmembrane helix</keyword>
<dbReference type="EC" id="2.3.1.275" evidence="1"/>
<dbReference type="EMBL" id="AL111168">
    <property type="protein sequence ID" value="CAL34508.1"/>
    <property type="molecule type" value="Genomic_DNA"/>
</dbReference>
<dbReference type="PIR" id="D81378">
    <property type="entry name" value="D81378"/>
</dbReference>
<dbReference type="RefSeq" id="WP_002854681.1">
    <property type="nucleotide sequence ID" value="NZ_SZUC01000004.1"/>
</dbReference>
<dbReference type="RefSeq" id="YP_002343795.1">
    <property type="nucleotide sequence ID" value="NC_002163.1"/>
</dbReference>
<dbReference type="SMR" id="Q9PIE4"/>
<dbReference type="IntAct" id="Q9PIE4">
    <property type="interactions" value="8"/>
</dbReference>
<dbReference type="STRING" id="192222.Cj0357c"/>
<dbReference type="PaxDb" id="192222-Cj0357c"/>
<dbReference type="EnsemblBacteria" id="CAL34508">
    <property type="protein sequence ID" value="CAL34508"/>
    <property type="gene ID" value="Cj0357c"/>
</dbReference>
<dbReference type="GeneID" id="904681"/>
<dbReference type="KEGG" id="cje:Cj0357c"/>
<dbReference type="PATRIC" id="fig|192222.6.peg.349"/>
<dbReference type="eggNOG" id="COG0344">
    <property type="taxonomic scope" value="Bacteria"/>
</dbReference>
<dbReference type="HOGENOM" id="CLU_081254_2_0_7"/>
<dbReference type="OrthoDB" id="9777124at2"/>
<dbReference type="UniPathway" id="UPA00085"/>
<dbReference type="Proteomes" id="UP000000799">
    <property type="component" value="Chromosome"/>
</dbReference>
<dbReference type="GO" id="GO:0005886">
    <property type="term" value="C:plasma membrane"/>
    <property type="evidence" value="ECO:0007669"/>
    <property type="project" value="UniProtKB-SubCell"/>
</dbReference>
<dbReference type="GO" id="GO:0043772">
    <property type="term" value="F:acyl-phosphate glycerol-3-phosphate acyltransferase activity"/>
    <property type="evidence" value="ECO:0007669"/>
    <property type="project" value="UniProtKB-UniRule"/>
</dbReference>
<dbReference type="GO" id="GO:0008654">
    <property type="term" value="P:phospholipid biosynthetic process"/>
    <property type="evidence" value="ECO:0007669"/>
    <property type="project" value="UniProtKB-UniRule"/>
</dbReference>
<dbReference type="HAMAP" id="MF_01043">
    <property type="entry name" value="PlsY"/>
    <property type="match status" value="1"/>
</dbReference>
<dbReference type="InterPro" id="IPR003811">
    <property type="entry name" value="G3P_acylTferase_PlsY"/>
</dbReference>
<dbReference type="NCBIfam" id="TIGR00023">
    <property type="entry name" value="glycerol-3-phosphate 1-O-acyltransferase PlsY"/>
    <property type="match status" value="1"/>
</dbReference>
<dbReference type="PANTHER" id="PTHR30309:SF0">
    <property type="entry name" value="GLYCEROL-3-PHOSPHATE ACYLTRANSFERASE-RELATED"/>
    <property type="match status" value="1"/>
</dbReference>
<dbReference type="PANTHER" id="PTHR30309">
    <property type="entry name" value="INNER MEMBRANE PROTEIN YGIH"/>
    <property type="match status" value="1"/>
</dbReference>
<dbReference type="Pfam" id="PF02660">
    <property type="entry name" value="G3P_acyltransf"/>
    <property type="match status" value="1"/>
</dbReference>
<dbReference type="SMART" id="SM01207">
    <property type="entry name" value="G3P_acyltransf"/>
    <property type="match status" value="1"/>
</dbReference>
<feature type="chain" id="PRO_0000188341" description="Glycerol-3-phosphate acyltransferase">
    <location>
        <begin position="1"/>
        <end position="202"/>
    </location>
</feature>
<feature type="transmembrane region" description="Helical" evidence="1">
    <location>
        <begin position="3"/>
        <end position="23"/>
    </location>
</feature>
<feature type="transmembrane region" description="Helical" evidence="1">
    <location>
        <begin position="87"/>
        <end position="107"/>
    </location>
</feature>
<feature type="transmembrane region" description="Helical" evidence="1">
    <location>
        <begin position="118"/>
        <end position="138"/>
    </location>
</feature>
<feature type="transmembrane region" description="Helical" evidence="1">
    <location>
        <begin position="144"/>
        <end position="164"/>
    </location>
</feature>
<feature type="transmembrane region" description="Helical" evidence="1">
    <location>
        <begin position="167"/>
        <end position="187"/>
    </location>
</feature>
<proteinExistence type="inferred from homology"/>
<protein>
    <recommendedName>
        <fullName evidence="1">Glycerol-3-phosphate acyltransferase</fullName>
    </recommendedName>
    <alternativeName>
        <fullName evidence="1">Acyl-PO4 G3P acyltransferase</fullName>
    </alternativeName>
    <alternativeName>
        <fullName evidence="1">Acyl-phosphate--glycerol-3-phosphate acyltransferase</fullName>
    </alternativeName>
    <alternativeName>
        <fullName evidence="1">G3P acyltransferase</fullName>
        <shortName evidence="1">GPAT</shortName>
        <ecNumber evidence="1">2.3.1.275</ecNumber>
    </alternativeName>
    <alternativeName>
        <fullName evidence="1">Lysophosphatidic acid synthase</fullName>
        <shortName evidence="1">LPA synthase</shortName>
    </alternativeName>
</protein>